<keyword id="KW-0072">Autophagy</keyword>
<keyword id="KW-0963">Cytoplasm</keyword>
<keyword id="KW-0328">Glycosyltransferase</keyword>
<keyword id="KW-0444">Lipid biosynthesis</keyword>
<keyword id="KW-0443">Lipid metabolism</keyword>
<keyword id="KW-0472">Membrane</keyword>
<keyword id="KW-0653">Protein transport</keyword>
<keyword id="KW-1185">Reference proteome</keyword>
<keyword id="KW-0677">Repeat</keyword>
<keyword id="KW-0752">Steroid biosynthesis</keyword>
<keyword id="KW-0753">Steroid metabolism</keyword>
<keyword id="KW-0756">Sterol biosynthesis</keyword>
<keyword id="KW-1207">Sterol metabolism</keyword>
<keyword id="KW-0808">Transferase</keyword>
<keyword id="KW-0813">Transport</keyword>
<evidence type="ECO:0000250" key="1">
    <source>
        <dbReference type="UniProtKB" id="Q06321"/>
    </source>
</evidence>
<evidence type="ECO:0000250" key="2">
    <source>
        <dbReference type="UniProtKB" id="Q2U0C3"/>
    </source>
</evidence>
<evidence type="ECO:0000255" key="3"/>
<evidence type="ECO:0000255" key="4">
    <source>
        <dbReference type="PROSITE-ProRule" id="PRU00145"/>
    </source>
</evidence>
<evidence type="ECO:0000256" key="5">
    <source>
        <dbReference type="SAM" id="MobiDB-lite"/>
    </source>
</evidence>
<evidence type="ECO:0000305" key="6"/>
<feature type="chain" id="PRO_0000215613" description="Sterol 3-beta-glucosyltransferase">
    <location>
        <begin position="1"/>
        <end position="1553"/>
    </location>
</feature>
<feature type="domain" description="GRAM 1" evidence="3">
    <location>
        <begin position="323"/>
        <end position="370"/>
    </location>
</feature>
<feature type="domain" description="PH" evidence="4">
    <location>
        <begin position="374"/>
        <end position="470"/>
    </location>
</feature>
<feature type="domain" description="GRAM 2" evidence="3">
    <location>
        <begin position="464"/>
        <end position="495"/>
    </location>
</feature>
<feature type="domain" description="GRAM 3" evidence="3">
    <location>
        <begin position="834"/>
        <end position="900"/>
    </location>
</feature>
<feature type="region of interest" description="Disordered" evidence="5">
    <location>
        <begin position="1"/>
        <end position="106"/>
    </location>
</feature>
<feature type="region of interest" description="Disordered" evidence="5">
    <location>
        <begin position="189"/>
        <end position="270"/>
    </location>
</feature>
<feature type="region of interest" description="Disordered" evidence="5">
    <location>
        <begin position="542"/>
        <end position="569"/>
    </location>
</feature>
<feature type="region of interest" description="Disordered" evidence="5">
    <location>
        <begin position="611"/>
        <end position="662"/>
    </location>
</feature>
<feature type="region of interest" description="Disordered" evidence="5">
    <location>
        <begin position="805"/>
        <end position="825"/>
    </location>
</feature>
<feature type="region of interest" description="Disordered" evidence="5">
    <location>
        <begin position="1446"/>
        <end position="1504"/>
    </location>
</feature>
<feature type="region of interest" description="Disordered" evidence="5">
    <location>
        <begin position="1527"/>
        <end position="1553"/>
    </location>
</feature>
<feature type="compositionally biased region" description="Polar residues" evidence="5">
    <location>
        <begin position="1"/>
        <end position="10"/>
    </location>
</feature>
<feature type="compositionally biased region" description="Polar residues" evidence="5">
    <location>
        <begin position="25"/>
        <end position="36"/>
    </location>
</feature>
<feature type="compositionally biased region" description="Basic and acidic residues" evidence="5">
    <location>
        <begin position="90"/>
        <end position="100"/>
    </location>
</feature>
<feature type="compositionally biased region" description="Low complexity" evidence="5">
    <location>
        <begin position="211"/>
        <end position="222"/>
    </location>
</feature>
<feature type="compositionally biased region" description="Basic residues" evidence="5">
    <location>
        <begin position="223"/>
        <end position="232"/>
    </location>
</feature>
<feature type="compositionally biased region" description="Basic and acidic residues" evidence="5">
    <location>
        <begin position="633"/>
        <end position="650"/>
    </location>
</feature>
<feature type="compositionally biased region" description="Polar residues" evidence="5">
    <location>
        <begin position="651"/>
        <end position="662"/>
    </location>
</feature>
<feature type="compositionally biased region" description="Basic and acidic residues" evidence="5">
    <location>
        <begin position="810"/>
        <end position="819"/>
    </location>
</feature>
<feature type="compositionally biased region" description="Acidic residues" evidence="5">
    <location>
        <begin position="1466"/>
        <end position="1488"/>
    </location>
</feature>
<feature type="binding site" evidence="1">
    <location>
        <position position="1020"/>
    </location>
    <ligand>
        <name>UDP-alpha-D-glucose</name>
        <dbReference type="ChEBI" id="CHEBI:58885"/>
    </ligand>
</feature>
<feature type="binding site" evidence="1">
    <location>
        <position position="1021"/>
    </location>
    <ligand>
        <name>UDP-alpha-D-glucose</name>
        <dbReference type="ChEBI" id="CHEBI:58885"/>
    </ligand>
</feature>
<feature type="binding site" evidence="1">
    <location>
        <position position="1023"/>
    </location>
    <ligand>
        <name>UDP-alpha-D-glucose</name>
        <dbReference type="ChEBI" id="CHEBI:58885"/>
    </ligand>
</feature>
<feature type="binding site" evidence="1">
    <location>
        <position position="1328"/>
    </location>
    <ligand>
        <name>UDP-alpha-D-glucose</name>
        <dbReference type="ChEBI" id="CHEBI:58885"/>
    </ligand>
</feature>
<feature type="binding site" evidence="1">
    <location>
        <position position="1330"/>
    </location>
    <ligand>
        <name>UDP-alpha-D-glucose</name>
        <dbReference type="ChEBI" id="CHEBI:58885"/>
    </ligand>
</feature>
<feature type="binding site" evidence="1">
    <location>
        <position position="1343"/>
    </location>
    <ligand>
        <name>UDP-alpha-D-glucose</name>
        <dbReference type="ChEBI" id="CHEBI:58885"/>
    </ligand>
</feature>
<feature type="binding site" evidence="1">
    <location>
        <position position="1346"/>
    </location>
    <ligand>
        <name>UDP-alpha-D-glucose</name>
        <dbReference type="ChEBI" id="CHEBI:58885"/>
    </ligand>
</feature>
<feature type="binding site" evidence="1">
    <location>
        <position position="1347"/>
    </location>
    <ligand>
        <name>UDP-alpha-D-glucose</name>
        <dbReference type="ChEBI" id="CHEBI:58885"/>
    </ligand>
</feature>
<feature type="binding site" evidence="1">
    <location>
        <position position="1348"/>
    </location>
    <ligand>
        <name>UDP-alpha-D-glucose</name>
        <dbReference type="ChEBI" id="CHEBI:58885"/>
    </ligand>
</feature>
<feature type="binding site" evidence="1">
    <location>
        <position position="1367"/>
    </location>
    <ligand>
        <name>UDP-alpha-D-glucose</name>
        <dbReference type="ChEBI" id="CHEBI:58885"/>
    </ligand>
</feature>
<feature type="binding site" evidence="1">
    <location>
        <position position="1368"/>
    </location>
    <ligand>
        <name>UDP-alpha-D-glucose</name>
        <dbReference type="ChEBI" id="CHEBI:58885"/>
    </ligand>
</feature>
<organism>
    <name type="scientific">Neurospora crassa (strain ATCC 24698 / 74-OR23-1A / CBS 708.71 / DSM 1257 / FGSC 987)</name>
    <dbReference type="NCBI Taxonomy" id="367110"/>
    <lineage>
        <taxon>Eukaryota</taxon>
        <taxon>Fungi</taxon>
        <taxon>Dikarya</taxon>
        <taxon>Ascomycota</taxon>
        <taxon>Pezizomycotina</taxon>
        <taxon>Sordariomycetes</taxon>
        <taxon>Sordariomycetidae</taxon>
        <taxon>Sordariales</taxon>
        <taxon>Sordariaceae</taxon>
        <taxon>Neurospora</taxon>
    </lineage>
</organism>
<reference key="1">
    <citation type="journal article" date="2003" name="Nature">
        <title>The genome sequence of the filamentous fungus Neurospora crassa.</title>
        <authorList>
            <person name="Galagan J.E."/>
            <person name="Calvo S.E."/>
            <person name="Borkovich K.A."/>
            <person name="Selker E.U."/>
            <person name="Read N.D."/>
            <person name="Jaffe D.B."/>
            <person name="FitzHugh W."/>
            <person name="Ma L.-J."/>
            <person name="Smirnov S."/>
            <person name="Purcell S."/>
            <person name="Rehman B."/>
            <person name="Elkins T."/>
            <person name="Engels R."/>
            <person name="Wang S."/>
            <person name="Nielsen C.B."/>
            <person name="Butler J."/>
            <person name="Endrizzi M."/>
            <person name="Qui D."/>
            <person name="Ianakiev P."/>
            <person name="Bell-Pedersen D."/>
            <person name="Nelson M.A."/>
            <person name="Werner-Washburne M."/>
            <person name="Selitrennikoff C.P."/>
            <person name="Kinsey J.A."/>
            <person name="Braun E.L."/>
            <person name="Zelter A."/>
            <person name="Schulte U."/>
            <person name="Kothe G.O."/>
            <person name="Jedd G."/>
            <person name="Mewes H.-W."/>
            <person name="Staben C."/>
            <person name="Marcotte E."/>
            <person name="Greenberg D."/>
            <person name="Roy A."/>
            <person name="Foley K."/>
            <person name="Naylor J."/>
            <person name="Stange-Thomann N."/>
            <person name="Barrett R."/>
            <person name="Gnerre S."/>
            <person name="Kamal M."/>
            <person name="Kamvysselis M."/>
            <person name="Mauceli E.W."/>
            <person name="Bielke C."/>
            <person name="Rudd S."/>
            <person name="Frishman D."/>
            <person name="Krystofova S."/>
            <person name="Rasmussen C."/>
            <person name="Metzenberg R.L."/>
            <person name="Perkins D.D."/>
            <person name="Kroken S."/>
            <person name="Cogoni C."/>
            <person name="Macino G."/>
            <person name="Catcheside D.E.A."/>
            <person name="Li W."/>
            <person name="Pratt R.J."/>
            <person name="Osmani S.A."/>
            <person name="DeSouza C.P.C."/>
            <person name="Glass N.L."/>
            <person name="Orbach M.J."/>
            <person name="Berglund J.A."/>
            <person name="Voelker R."/>
            <person name="Yarden O."/>
            <person name="Plamann M."/>
            <person name="Seiler S."/>
            <person name="Dunlap J.C."/>
            <person name="Radford A."/>
            <person name="Aramayo R."/>
            <person name="Natvig D.O."/>
            <person name="Alex L.A."/>
            <person name="Mannhaupt G."/>
            <person name="Ebbole D.J."/>
            <person name="Freitag M."/>
            <person name="Paulsen I."/>
            <person name="Sachs M.S."/>
            <person name="Lander E.S."/>
            <person name="Nusbaum C."/>
            <person name="Birren B.W."/>
        </authorList>
    </citation>
    <scope>NUCLEOTIDE SEQUENCE [LARGE SCALE GENOMIC DNA]</scope>
    <source>
        <strain>ATCC 24698 / 74-OR23-1A / CBS 708.71 / DSM 1257 / FGSC 987</strain>
    </source>
</reference>
<comment type="function">
    <text evidence="1">Sterol glycosyltransferase responsible for the glycosylation of ergosterol to form ergosterol-glucoside.</text>
</comment>
<comment type="catalytic activity">
    <reaction evidence="1">
        <text>a sterol + UDP-alpha-D-glucose = a sterol 3-beta-D-glucoside + UDP + H(+)</text>
        <dbReference type="Rhea" id="RHEA:22724"/>
        <dbReference type="ChEBI" id="CHEBI:15378"/>
        <dbReference type="ChEBI" id="CHEBI:15889"/>
        <dbReference type="ChEBI" id="CHEBI:37424"/>
        <dbReference type="ChEBI" id="CHEBI:58223"/>
        <dbReference type="ChEBI" id="CHEBI:58885"/>
        <dbReference type="EC" id="2.4.1.173"/>
    </reaction>
    <physiologicalReaction direction="left-to-right" evidence="1">
        <dbReference type="Rhea" id="RHEA:22725"/>
    </physiologicalReaction>
</comment>
<comment type="catalytic activity">
    <reaction evidence="1">
        <text>ergosterol + UDP-alpha-D-glucose = ergosteryl 3-beta-D-glucoside + UDP + H(+)</text>
        <dbReference type="Rhea" id="RHEA:61836"/>
        <dbReference type="ChEBI" id="CHEBI:15378"/>
        <dbReference type="ChEBI" id="CHEBI:16933"/>
        <dbReference type="ChEBI" id="CHEBI:52973"/>
        <dbReference type="ChEBI" id="CHEBI:58223"/>
        <dbReference type="ChEBI" id="CHEBI:58885"/>
    </reaction>
    <physiologicalReaction direction="left-to-right" evidence="1">
        <dbReference type="Rhea" id="RHEA:61837"/>
    </physiologicalReaction>
</comment>
<comment type="subcellular location">
    <subcellularLocation>
        <location evidence="1">Cytoplasm</location>
    </subcellularLocation>
    <subcellularLocation>
        <location evidence="2">Preautophagosomal structure membrane</location>
        <topology evidence="2">Peripheral membrane protein</topology>
    </subcellularLocation>
</comment>
<comment type="domain">
    <text evidence="2">The GRAM and PH domains are required for the localization of ATG26 to the preautophagosomal structure (PAS) and are involved in autophagy (By similarity).</text>
</comment>
<comment type="similarity">
    <text evidence="6">Belongs to the glycosyltransferase 28 family.</text>
</comment>
<protein>
    <recommendedName>
        <fullName evidence="6">Sterol 3-beta-glucosyltransferase</fullName>
        <ecNumber evidence="1">2.4.1.-</ecNumber>
        <ecNumber evidence="1">2.4.1.173</ecNumber>
    </recommendedName>
    <alternativeName>
        <fullName evidence="1">Autophagy-related protein 26</fullName>
    </alternativeName>
</protein>
<name>ATG26_NEUCR</name>
<accession>Q7S1I0</accession>
<accession>A7UXD3</accession>
<accession>A7UXI0</accession>
<accession>V5IKF3</accession>
<proteinExistence type="inferred from homology"/>
<gene>
    <name type="primary">apg-12</name>
    <name evidence="1" type="synonym">atg26</name>
    <name type="ORF">NCU09301</name>
    <name type="ORF">NCU11419/NCU11407</name>
</gene>
<sequence>MASSQPTSSGPILDSPPSPNPQSQLNTETSSSQHRANPSEAPAQPGPGPARPSALTKRPSHREVAAYRMSRKLQRLRADSNQPHSPTMELPDRLKDNGKEEDNEEDVLQPQGGMFMNMNQSIFGLIAAAGSTVDFHDRFEGQSSEDEDDVPNHMAMTFAGPGIKGTARNRETAGTVKSLSQTVVFNKPPASATVDAGPSNIHRRRLPGHKLLQSVPSLSRLSSSHKSKKTKQHNATAMADNKIEEEEDPDPSSPLPPLSKDETESLGLAPPIEIVRAEGNGAPLMSRMLEARAEMEARPSFDLDRLSGEHRRDDAGVTGQLAKKLKDIFEFDTAEEVIEEYPCWLLQHVLLQGYMYITANHIAFYAHLPKKAHEIAKSGYLSKSGKRNPKYNRYWFRLKGDVLSYYQDPKDHYFPAGQIDLRYGISASVNDKEKEGNYFSVSTHHRTYHFKADSARSAKEWVKSLQRVIFRSHNDGDSVKISIPIRNILDIEEAQMVEFADTCKIRVIDNDETYAIDEYFFSFFSFGKKAIQVLKVLVEDSSPEDSGANDAPKGTGGDRAIGDNLGSPRTRTFSEGVKATLSPVSPIQIASPSSRASGDYFKSSFDGTRPFSRRSFDASPGTAGYAGSPPRRLHGDGRRSFSKPRHEPHASTDSYAQSFDDPSQASLSALVASGSEDQSASQILRGSDVFHSPIFRRSASATRATTEGEGVAAPPIVRQHTAGLVRLHGPHHAATTGQIGDHMAEAEGGPSTPMLQSIAMMGNYPLQRANAFMGYLDQQSRRMSNLLATESMGYVEKVSGMWKGGKKHYDHPAGRRTEREDVEDDPEERALSEARFQAHFALPETERLQAAYFGFIVRVLPLYGKIYISNRHFCFRSLLPGTRTKLILPLKDIETVDKEKGFRFGYSGLVVVIRGHEEIFFEFAKAENRDDCAITIIQSLDAARYLAESQEVEEAQAAEAERDALNQARNEEFPDHEIELPRQASGVSDAPTILFDDPKASFLNFKPSEPMRITCLTIGSRGDVQPYIALCKRLLEEGHRPKIVTHREFKDWIESHGIEFGPVEGDPSELMRICIENGTFTYAFLREANSKFRGWLDELLTSAWEACQGSDLLIESPSAMAGIHIAEALGIPYFRAFTMPWTRTRAYPHAFIMPGQKMGGAYNYITYVMFDNVFWKATAHQVNRWRNKYLGLPNTSLEKLQPNKVPFLYNFSPSVVPPPIDYSDWIRVTGYWFLDEGGDKWQPPKELTDFIAKARADEKKLVYIGFGSIIVSDPAKMTQEIIDAVLKADVRCILSKGWSDRSATVDGVEKPKVADPSFPPEILQIQSAPHDWLFQQVDAAAHHGGSGTTGASLRAGIPTIIRPFFGDQFFFAGRVEDLGVGIYLKKWGVQSFARALWEATHSSRMQMRAEVLGGQIRAENGVDTAIQAIYRDLDYARNLITLKRQKHQSRRNSVATPTPGAKPNAPEDDQGQAAEEDDIDADDEEEESWTFVGGNEDDLTGSMSMSRSDMLSQTVADLRGVKVGKAPALGSRVLSSPPTSPGAMRGAGGVKYV</sequence>
<dbReference type="EC" id="2.4.1.-" evidence="1"/>
<dbReference type="EC" id="2.4.1.173" evidence="1"/>
<dbReference type="EMBL" id="CM002242">
    <property type="protein sequence ID" value="ESA41790.1"/>
    <property type="molecule type" value="Genomic_DNA"/>
</dbReference>
<dbReference type="EMBL" id="CM002242">
    <property type="protein sequence ID" value="ESA41791.1"/>
    <property type="molecule type" value="Genomic_DNA"/>
</dbReference>
<dbReference type="EMBL" id="CM002242">
    <property type="protein sequence ID" value="ESA41792.1"/>
    <property type="molecule type" value="Genomic_DNA"/>
</dbReference>
<dbReference type="RefSeq" id="XP_011395289.1">
    <property type="nucleotide sequence ID" value="XM_011396987.1"/>
</dbReference>
<dbReference type="RefSeq" id="XP_011395290.1">
    <property type="nucleotide sequence ID" value="XM_011396988.1"/>
</dbReference>
<dbReference type="RefSeq" id="XP_011395291.1">
    <property type="nucleotide sequence ID" value="XM_011396989.1"/>
</dbReference>
<dbReference type="SMR" id="Q7S1I0"/>
<dbReference type="FunCoup" id="Q7S1I0">
    <property type="interactions" value="89"/>
</dbReference>
<dbReference type="STRING" id="367110.Q7S1I0"/>
<dbReference type="CAZy" id="GT1">
    <property type="family name" value="Glycosyltransferase Family 1"/>
</dbReference>
<dbReference type="PaxDb" id="5141-EFNCRP00000009839"/>
<dbReference type="EnsemblFungi" id="ESA41790">
    <property type="protein sequence ID" value="ESA41790"/>
    <property type="gene ID" value="NCU09301"/>
</dbReference>
<dbReference type="EnsemblFungi" id="ESA41791">
    <property type="protein sequence ID" value="ESA41791"/>
    <property type="gene ID" value="NCU09301"/>
</dbReference>
<dbReference type="EnsemblFungi" id="ESA41792">
    <property type="protein sequence ID" value="ESA41792"/>
    <property type="gene ID" value="NCU09301"/>
</dbReference>
<dbReference type="GeneID" id="23568507"/>
<dbReference type="KEGG" id="ncr:NCU09301"/>
<dbReference type="VEuPathDB" id="FungiDB:NCU09301"/>
<dbReference type="HOGENOM" id="CLU_000537_6_0_1"/>
<dbReference type="InParanoid" id="Q7S1I0"/>
<dbReference type="OrthoDB" id="10261837at2759"/>
<dbReference type="Proteomes" id="UP000001805">
    <property type="component" value="Chromosome 7, Linkage Group VII"/>
</dbReference>
<dbReference type="GO" id="GO:0034045">
    <property type="term" value="C:phagophore assembly site membrane"/>
    <property type="evidence" value="ECO:0007669"/>
    <property type="project" value="UniProtKB-SubCell"/>
</dbReference>
<dbReference type="GO" id="GO:0016906">
    <property type="term" value="F:sterol 3-beta-glucosyltransferase activity"/>
    <property type="evidence" value="ECO:0007669"/>
    <property type="project" value="UniProtKB-EC"/>
</dbReference>
<dbReference type="GO" id="GO:0008194">
    <property type="term" value="F:UDP-glycosyltransferase activity"/>
    <property type="evidence" value="ECO:0000318"/>
    <property type="project" value="GO_Central"/>
</dbReference>
<dbReference type="GO" id="GO:0006914">
    <property type="term" value="P:autophagy"/>
    <property type="evidence" value="ECO:0007669"/>
    <property type="project" value="UniProtKB-KW"/>
</dbReference>
<dbReference type="GO" id="GO:0005975">
    <property type="term" value="P:carbohydrate metabolic process"/>
    <property type="evidence" value="ECO:0007669"/>
    <property type="project" value="InterPro"/>
</dbReference>
<dbReference type="GO" id="GO:0030259">
    <property type="term" value="P:lipid glycosylation"/>
    <property type="evidence" value="ECO:0007669"/>
    <property type="project" value="InterPro"/>
</dbReference>
<dbReference type="GO" id="GO:0015031">
    <property type="term" value="P:protein transport"/>
    <property type="evidence" value="ECO:0007669"/>
    <property type="project" value="UniProtKB-KW"/>
</dbReference>
<dbReference type="GO" id="GO:0016126">
    <property type="term" value="P:sterol biosynthetic process"/>
    <property type="evidence" value="ECO:0007669"/>
    <property type="project" value="UniProtKB-KW"/>
</dbReference>
<dbReference type="GO" id="GO:0016125">
    <property type="term" value="P:sterol metabolic process"/>
    <property type="evidence" value="ECO:0000318"/>
    <property type="project" value="GO_Central"/>
</dbReference>
<dbReference type="CDD" id="cd03784">
    <property type="entry name" value="GT1_Gtf-like"/>
    <property type="match status" value="1"/>
</dbReference>
<dbReference type="CDD" id="cd13215">
    <property type="entry name" value="PH-GRAM1_AGT26"/>
    <property type="match status" value="1"/>
</dbReference>
<dbReference type="CDD" id="cd13216">
    <property type="entry name" value="PH-GRAM2_AGT26"/>
    <property type="match status" value="1"/>
</dbReference>
<dbReference type="FunFam" id="2.30.29.30:FF:000303">
    <property type="entry name" value="Sterol 3-beta-glucosyltransferase"/>
    <property type="match status" value="1"/>
</dbReference>
<dbReference type="FunFam" id="2.30.29.30:FF:000560">
    <property type="entry name" value="Sterol 3-beta-glucosyltransferase"/>
    <property type="match status" value="1"/>
</dbReference>
<dbReference type="FunFam" id="3.40.50.2000:FF:000029">
    <property type="entry name" value="Sterol 3-beta-glucosyltransferase"/>
    <property type="match status" value="1"/>
</dbReference>
<dbReference type="FunFam" id="3.40.50.2000:FF:000009">
    <property type="entry name" value="Sterol 3-beta-glucosyltransferase UGT80A2"/>
    <property type="match status" value="1"/>
</dbReference>
<dbReference type="Gene3D" id="3.40.50.2000">
    <property type="entry name" value="Glycogen Phosphorylase B"/>
    <property type="match status" value="2"/>
</dbReference>
<dbReference type="Gene3D" id="2.30.29.30">
    <property type="entry name" value="Pleckstrin-homology domain (PH domain)/Phosphotyrosine-binding domain (PTB)"/>
    <property type="match status" value="3"/>
</dbReference>
<dbReference type="InterPro" id="IPR048066">
    <property type="entry name" value="ATG26_PH_GRAM1"/>
</dbReference>
<dbReference type="InterPro" id="IPR048065">
    <property type="entry name" value="ATG26_PH_GRAM2"/>
</dbReference>
<dbReference type="InterPro" id="IPR010610">
    <property type="entry name" value="EryCIII-like_C"/>
</dbReference>
<dbReference type="InterPro" id="IPR050426">
    <property type="entry name" value="Glycosyltransferase_28"/>
</dbReference>
<dbReference type="InterPro" id="IPR004276">
    <property type="entry name" value="GlycoTrans_28_N"/>
</dbReference>
<dbReference type="InterPro" id="IPR004182">
    <property type="entry name" value="GRAM"/>
</dbReference>
<dbReference type="InterPro" id="IPR011993">
    <property type="entry name" value="PH-like_dom_sf"/>
</dbReference>
<dbReference type="InterPro" id="IPR001849">
    <property type="entry name" value="PH_domain"/>
</dbReference>
<dbReference type="InterPro" id="IPR002213">
    <property type="entry name" value="UDP_glucos_trans"/>
</dbReference>
<dbReference type="PANTHER" id="PTHR48050">
    <property type="entry name" value="STEROL 3-BETA-GLUCOSYLTRANSFERASE"/>
    <property type="match status" value="1"/>
</dbReference>
<dbReference type="PANTHER" id="PTHR48050:SF25">
    <property type="entry name" value="STEROL 3-BETA-GLUCOSYLTRANSFERASE"/>
    <property type="match status" value="1"/>
</dbReference>
<dbReference type="Pfam" id="PF06722">
    <property type="entry name" value="EryCIII-like_C"/>
    <property type="match status" value="1"/>
</dbReference>
<dbReference type="Pfam" id="PF03033">
    <property type="entry name" value="Glyco_transf_28"/>
    <property type="match status" value="1"/>
</dbReference>
<dbReference type="Pfam" id="PF02893">
    <property type="entry name" value="GRAM"/>
    <property type="match status" value="2"/>
</dbReference>
<dbReference type="Pfam" id="PF00169">
    <property type="entry name" value="PH"/>
    <property type="match status" value="1"/>
</dbReference>
<dbReference type="SMART" id="SM00568">
    <property type="entry name" value="GRAM"/>
    <property type="match status" value="2"/>
</dbReference>
<dbReference type="SMART" id="SM00233">
    <property type="entry name" value="PH"/>
    <property type="match status" value="1"/>
</dbReference>
<dbReference type="SUPFAM" id="SSF50729">
    <property type="entry name" value="PH domain-like"/>
    <property type="match status" value="1"/>
</dbReference>
<dbReference type="SUPFAM" id="SSF53756">
    <property type="entry name" value="UDP-Glycosyltransferase/glycogen phosphorylase"/>
    <property type="match status" value="1"/>
</dbReference>
<dbReference type="PROSITE" id="PS50003">
    <property type="entry name" value="PH_DOMAIN"/>
    <property type="match status" value="1"/>
</dbReference>